<accession>P0A8Z1</accession>
<accession>P04379</accession>
<reference key="1">
    <citation type="journal article" date="2002" name="Proc. Natl. Acad. Sci. U.S.A.">
        <title>Extensive mosaic structure revealed by the complete genome sequence of uropathogenic Escherichia coli.</title>
        <authorList>
            <person name="Welch R.A."/>
            <person name="Burland V."/>
            <person name="Plunkett G. III"/>
            <person name="Redford P."/>
            <person name="Roesch P."/>
            <person name="Rasko D."/>
            <person name="Buckles E.L."/>
            <person name="Liou S.-R."/>
            <person name="Boutin A."/>
            <person name="Hackett J."/>
            <person name="Stroud D."/>
            <person name="Mayhew G.F."/>
            <person name="Rose D.J."/>
            <person name="Zhou S."/>
            <person name="Schwartz D.C."/>
            <person name="Perna N.T."/>
            <person name="Mobley H.L.T."/>
            <person name="Donnenberg M.S."/>
            <person name="Blattner F.R."/>
        </authorList>
    </citation>
    <scope>NUCLEOTIDE SEQUENCE [LARGE SCALE GENOMIC DNA]</scope>
    <source>
        <strain>CFT073 / ATCC 700928 / UPEC</strain>
    </source>
</reference>
<organism>
    <name type="scientific">Escherichia coli O6:H1 (strain CFT073 / ATCC 700928 / UPEC)</name>
    <dbReference type="NCBI Taxonomy" id="199310"/>
    <lineage>
        <taxon>Bacteria</taxon>
        <taxon>Pseudomonadati</taxon>
        <taxon>Pseudomonadota</taxon>
        <taxon>Gammaproteobacteria</taxon>
        <taxon>Enterobacterales</taxon>
        <taxon>Enterobacteriaceae</taxon>
        <taxon>Escherichia</taxon>
    </lineage>
</organism>
<keyword id="KW-0378">Hydrolase</keyword>
<keyword id="KW-1185">Reference proteome</keyword>
<gene>
    <name type="primary">yciA</name>
    <name type="ordered locus">c1719</name>
</gene>
<comment type="function">
    <text evidence="1">Catalyzes the hydrolysis of the thioester bond in palmitoyl-CoA and malonyl-CoA.</text>
</comment>
<comment type="similarity">
    <text evidence="3">Belongs to the acyl coenzyme A hydrolase family.</text>
</comment>
<protein>
    <recommendedName>
        <fullName>Acyl-CoA thioester hydrolase YciA</fullName>
        <ecNumber>3.1.2.-</ecNumber>
    </recommendedName>
</protein>
<feature type="chain" id="PRO_0000053818" description="Acyl-CoA thioester hydrolase YciA">
    <location>
        <begin position="1"/>
        <end position="132"/>
    </location>
</feature>
<feature type="domain" description="HotDog ACOT-type" evidence="2">
    <location>
        <begin position="8"/>
        <end position="123"/>
    </location>
</feature>
<proteinExistence type="inferred from homology"/>
<name>YCIA_ECOL6</name>
<dbReference type="EC" id="3.1.2.-"/>
<dbReference type="EMBL" id="AE014075">
    <property type="protein sequence ID" value="AAN80186.1"/>
    <property type="molecule type" value="Genomic_DNA"/>
</dbReference>
<dbReference type="RefSeq" id="WP_000108160.1">
    <property type="nucleotide sequence ID" value="NZ_CP051263.1"/>
</dbReference>
<dbReference type="SMR" id="P0A8Z1"/>
<dbReference type="STRING" id="199310.c1719"/>
<dbReference type="GeneID" id="93775322"/>
<dbReference type="KEGG" id="ecc:c1719"/>
<dbReference type="eggNOG" id="COG1607">
    <property type="taxonomic scope" value="Bacteria"/>
</dbReference>
<dbReference type="HOGENOM" id="CLU_050164_2_0_6"/>
<dbReference type="BioCyc" id="ECOL199310:C1719-MONOMER"/>
<dbReference type="Proteomes" id="UP000001410">
    <property type="component" value="Chromosome"/>
</dbReference>
<dbReference type="GO" id="GO:0005829">
    <property type="term" value="C:cytosol"/>
    <property type="evidence" value="ECO:0007669"/>
    <property type="project" value="TreeGrafter"/>
</dbReference>
<dbReference type="GO" id="GO:0052816">
    <property type="term" value="F:long-chain fatty acyl-CoA hydrolase activity"/>
    <property type="evidence" value="ECO:0007669"/>
    <property type="project" value="TreeGrafter"/>
</dbReference>
<dbReference type="GO" id="GO:0006637">
    <property type="term" value="P:acyl-CoA metabolic process"/>
    <property type="evidence" value="ECO:0007669"/>
    <property type="project" value="TreeGrafter"/>
</dbReference>
<dbReference type="GO" id="GO:0009062">
    <property type="term" value="P:fatty acid catabolic process"/>
    <property type="evidence" value="ECO:0007669"/>
    <property type="project" value="TreeGrafter"/>
</dbReference>
<dbReference type="CDD" id="cd03442">
    <property type="entry name" value="BFIT_BACH"/>
    <property type="match status" value="1"/>
</dbReference>
<dbReference type="FunFam" id="3.10.129.10:FF:000008">
    <property type="entry name" value="Acyl-CoA thioester hydrolase"/>
    <property type="match status" value="1"/>
</dbReference>
<dbReference type="Gene3D" id="3.10.129.10">
    <property type="entry name" value="Hotdog Thioesterase"/>
    <property type="match status" value="1"/>
</dbReference>
<dbReference type="InterPro" id="IPR040170">
    <property type="entry name" value="Cytosol_ACT"/>
</dbReference>
<dbReference type="InterPro" id="IPR033120">
    <property type="entry name" value="HOTDOG_ACOT"/>
</dbReference>
<dbReference type="InterPro" id="IPR029069">
    <property type="entry name" value="HotDog_dom_sf"/>
</dbReference>
<dbReference type="InterPro" id="IPR006683">
    <property type="entry name" value="Thioestr_dom"/>
</dbReference>
<dbReference type="NCBIfam" id="NF007970">
    <property type="entry name" value="PRK10694.1"/>
    <property type="match status" value="1"/>
</dbReference>
<dbReference type="PANTHER" id="PTHR11049">
    <property type="entry name" value="ACYL COENZYME A THIOESTER HYDROLASE"/>
    <property type="match status" value="1"/>
</dbReference>
<dbReference type="PANTHER" id="PTHR11049:SF5">
    <property type="entry name" value="ACYL-COA THIOESTER HYDROLASE YCIA"/>
    <property type="match status" value="1"/>
</dbReference>
<dbReference type="Pfam" id="PF03061">
    <property type="entry name" value="4HBT"/>
    <property type="match status" value="1"/>
</dbReference>
<dbReference type="SUPFAM" id="SSF54637">
    <property type="entry name" value="Thioesterase/thiol ester dehydrase-isomerase"/>
    <property type="match status" value="1"/>
</dbReference>
<dbReference type="PROSITE" id="PS51770">
    <property type="entry name" value="HOTDOG_ACOT"/>
    <property type="match status" value="1"/>
</dbReference>
<sequence>MSTTHNVPQGDLVLRTLAMPADTNANGDIFGGWLMSQMDIGGAILAKEIAHGRVVTVRVEGMTFLRPVAVGDVVCCYARCVQKGTTSVSINIEVWVKKVASEPIGQRYKATEALFKYVAVDPEGKPRALPVE</sequence>
<evidence type="ECO:0000250" key="1"/>
<evidence type="ECO:0000255" key="2">
    <source>
        <dbReference type="PROSITE-ProRule" id="PRU01106"/>
    </source>
</evidence>
<evidence type="ECO:0000305" key="3"/>